<comment type="function">
    <text evidence="2 3 4">Has antibacterial activity against the Gram-positive bacteria S.aureus (MIC=5.7 uM), S.dysgalactiae (MIC=5.7 uM), Nocardia sp (MIC=22.9 uM) and S.uberis (MIC=5.7 uM), and the Gram-negative bacteria P.aeruginosa, E.coli and A.calcoaceticus. Has antiprotozoal activity against T.cruzi. Has antifungal activity against the yeasts C.tropicalis (MIC=0.37 uM), C.guilliermondii (MIC=22.9 uM), C.albicans (MIC=5.7 uM) and C.albicans ATCC 1023 (MIC=5.7 uM). Lacks hemolytic activity against human and murine erythrocytes. Does not cause morphological changes in murine liver, spleen and kidney. Decreases viability of murine peritoneal cells. Fuses to, and disrupts liposomes.</text>
</comment>
<comment type="subcellular location">
    <subcellularLocation>
        <location evidence="2">Secreted</location>
    </subcellularLocation>
</comment>
<comment type="tissue specificity">
    <text evidence="2">Expressed by the skin glands.</text>
</comment>
<comment type="mass spectrometry"/>
<comment type="miscellaneous">
    <text evidence="6">The primary structure of this peptide is identical to that of Dermaseptin-H7 from Phyllomedusa hypochondrialis (AC P84600).</text>
</comment>
<comment type="similarity">
    <text evidence="1">Belongs to the frog skin active peptide (FSAP) family. Dermaseptin subfamily.</text>
</comment>
<name>DRS1_PITOR</name>
<proteinExistence type="evidence at protein level"/>
<keyword id="KW-0027">Amidation</keyword>
<keyword id="KW-0878">Amphibian defense peptide</keyword>
<keyword id="KW-0044">Antibiotic</keyword>
<keyword id="KW-0929">Antimicrobial</keyword>
<keyword id="KW-0903">Direct protein sequencing</keyword>
<keyword id="KW-0964">Secreted</keyword>
<sequence>GLWSTIKQKGKEAAIAAAKAAGQAALGAL</sequence>
<organism>
    <name type="scientific">Pithecopus oreades</name>
    <name type="common">Orange-legged leaf frog</name>
    <name type="synonym">Phyllomedusa oreades</name>
    <dbReference type="NCBI Taxonomy" id="239355"/>
    <lineage>
        <taxon>Eukaryota</taxon>
        <taxon>Metazoa</taxon>
        <taxon>Chordata</taxon>
        <taxon>Craniata</taxon>
        <taxon>Vertebrata</taxon>
        <taxon>Euteleostomi</taxon>
        <taxon>Amphibia</taxon>
        <taxon>Batrachia</taxon>
        <taxon>Anura</taxon>
        <taxon>Neobatrachia</taxon>
        <taxon>Hyloidea</taxon>
        <taxon>Hylidae</taxon>
        <taxon>Phyllomedusinae</taxon>
        <taxon>Pithecopus</taxon>
    </lineage>
</organism>
<protein>
    <recommendedName>
        <fullName evidence="5">Dermaseptin-O1</fullName>
        <shortName evidence="5">DRS-O1</shortName>
    </recommendedName>
    <alternativeName>
        <fullName>Dermaseptin-01</fullName>
        <shortName>DS 01</shortName>
    </alternativeName>
</protein>
<accession>P83637</accession>
<feature type="peptide" id="PRO_0000043640" description="Dermaseptin-O1" evidence="2">
    <location>
        <begin position="1"/>
        <end position="29"/>
    </location>
</feature>
<feature type="modified residue" description="Leucine amide" evidence="2">
    <location>
        <position position="29"/>
    </location>
</feature>
<evidence type="ECO:0000255" key="1"/>
<evidence type="ECO:0000269" key="2">
    <source>
    </source>
</evidence>
<evidence type="ECO:0000269" key="3">
    <source>
    </source>
</evidence>
<evidence type="ECO:0000269" key="4">
    <source>
    </source>
</evidence>
<evidence type="ECO:0000303" key="5">
    <source>
    </source>
</evidence>
<evidence type="ECO:0000305" key="6"/>
<reference key="1">
    <citation type="journal article" date="2002" name="J. Biol. Chem.">
        <title>Dermaseptins from Phyllomedusa oreades and Phyllomedusa distincta. Anti-Trypanosoma cruzi activity without cytotoxicity to mammalian cells.</title>
        <authorList>
            <person name="Brand G.D."/>
            <person name="Leite J.R.S.A."/>
            <person name="Silva L.P."/>
            <person name="Albuquerque S."/>
            <person name="Prates M.V."/>
            <person name="Azevedo R.B."/>
            <person name="Carregaro V."/>
            <person name="Silva J.S."/>
            <person name="Sa V.C.L."/>
            <person name="Brandao R.A."/>
            <person name="Bloch C. Jr."/>
        </authorList>
    </citation>
    <scope>PROTEIN SEQUENCE</scope>
    <scope>FUNCTION</scope>
    <scope>SUBCELLULAR LOCATION</scope>
    <scope>TISSUE SPECIFICITY</scope>
    <scope>MASS SPECTROMETRY</scope>
    <scope>AMIDATION AT LEU-29</scope>
    <scope>SYNTHESIS</scope>
    <source>
        <tissue>Skin secretion</tissue>
    </source>
</reference>
<reference key="2">
    <citation type="journal article" date="2008" name="Comp. Biochem. Physiol.">
        <title>Dermaseptins from Phyllomedusa oreades and Phyllomedusa distincta: liposomes fusion and/or lysis investigated by fluorescence and atomic force microscopy.</title>
        <authorList>
            <person name="Silva L.P."/>
            <person name="Leite J.R.S.A."/>
            <person name="Brand G.D."/>
            <person name="Regis W.B."/>
            <person name="Tedesco A.C."/>
            <person name="Azevedo R.B."/>
            <person name="Freitas S.M."/>
            <person name="Bloch C. Jr."/>
        </authorList>
    </citation>
    <scope>FUNCTION</scope>
    <scope>SYNTHESIS</scope>
</reference>
<reference key="3">
    <citation type="journal article" date="2008" name="Comp. Biochem. Physiol.">
        <title>Dermaseptins from Phyllomedusa oreades and Phyllomedusa distincta: Secondary structure, antimicrobial activity, and mammalian cell toxicity.</title>
        <authorList>
            <person name="Leite J.R.S.A."/>
            <person name="Brand G.D."/>
            <person name="Silva L.P."/>
            <person name="Kuckelhaus S.A.S."/>
            <person name="Bento W.R.C."/>
            <person name="Araujo A.L.T."/>
            <person name="Martins G.R."/>
            <person name="Lazzari A.M."/>
            <person name="Bloch C. Jr."/>
        </authorList>
    </citation>
    <scope>FUNCTION</scope>
    <scope>SYNTHESIS</scope>
</reference>
<reference key="4">
    <citation type="journal article" date="2008" name="Peptides">
        <title>A consistent nomenclature of antimicrobial peptides isolated from frogs of the subfamily Phyllomedusinae.</title>
        <authorList>
            <person name="Amiche M."/>
            <person name="Ladram A."/>
            <person name="Nicolas P."/>
        </authorList>
    </citation>
    <scope>NOMENCLATURE</scope>
</reference>
<dbReference type="SMR" id="P83637"/>
<dbReference type="GO" id="GO:0005576">
    <property type="term" value="C:extracellular region"/>
    <property type="evidence" value="ECO:0000314"/>
    <property type="project" value="UniProtKB"/>
</dbReference>
<dbReference type="GO" id="GO:0050829">
    <property type="term" value="P:defense response to Gram-negative bacterium"/>
    <property type="evidence" value="ECO:0000314"/>
    <property type="project" value="UniProtKB"/>
</dbReference>
<dbReference type="GO" id="GO:0050830">
    <property type="term" value="P:defense response to Gram-positive bacterium"/>
    <property type="evidence" value="ECO:0000314"/>
    <property type="project" value="UniProtKB"/>
</dbReference>